<reference key="1">
    <citation type="journal article" date="1997" name="J. Bacteriol.">
        <title>Complete genome sequence of Methanobacterium thermoautotrophicum deltaH: functional analysis and comparative genomics.</title>
        <authorList>
            <person name="Smith D.R."/>
            <person name="Doucette-Stamm L.A."/>
            <person name="Deloughery C."/>
            <person name="Lee H.-M."/>
            <person name="Dubois J."/>
            <person name="Aldredge T."/>
            <person name="Bashirzadeh R."/>
            <person name="Blakely D."/>
            <person name="Cook R."/>
            <person name="Gilbert K."/>
            <person name="Harrison D."/>
            <person name="Hoang L."/>
            <person name="Keagle P."/>
            <person name="Lumm W."/>
            <person name="Pothier B."/>
            <person name="Qiu D."/>
            <person name="Spadafora R."/>
            <person name="Vicare R."/>
            <person name="Wang Y."/>
            <person name="Wierzbowski J."/>
            <person name="Gibson R."/>
            <person name="Jiwani N."/>
            <person name="Caruso A."/>
            <person name="Bush D."/>
            <person name="Safer H."/>
            <person name="Patwell D."/>
            <person name="Prabhakar S."/>
            <person name="McDougall S."/>
            <person name="Shimer G."/>
            <person name="Goyal A."/>
            <person name="Pietrovski S."/>
            <person name="Church G.M."/>
            <person name="Daniels C.J."/>
            <person name="Mao J.-I."/>
            <person name="Rice P."/>
            <person name="Noelling J."/>
            <person name="Reeve J.N."/>
        </authorList>
    </citation>
    <scope>NUCLEOTIDE SEQUENCE [LARGE SCALE GENOMIC DNA]</scope>
    <source>
        <strain>ATCC 29096 / DSM 1053 / JCM 10044 / NBRC 100330 / Delta H</strain>
    </source>
</reference>
<accession>O27352</accession>
<protein>
    <recommendedName>
        <fullName evidence="1">Chaperone protein DnaJ</fullName>
    </recommendedName>
</protein>
<comment type="function">
    <text evidence="1">Participates actively in the response to hyperosmotic and heat shock by preventing the aggregation of stress-denatured proteins and by disaggregating proteins, also in an autonomous, DnaK-independent fashion. Unfolded proteins bind initially to DnaJ; upon interaction with the DnaJ-bound protein, DnaK hydrolyzes its bound ATP, resulting in the formation of a stable complex. GrpE releases ADP from DnaK; ATP binding to DnaK triggers the release of the substrate protein, thus completing the reaction cycle. Several rounds of ATP-dependent interactions between DnaJ, DnaK and GrpE are required for fully efficient folding. Also involved, together with DnaK and GrpE, in the DNA replication of plasmids through activation of initiation proteins.</text>
</comment>
<comment type="cofactor">
    <cofactor evidence="1">
        <name>Zn(2+)</name>
        <dbReference type="ChEBI" id="CHEBI:29105"/>
    </cofactor>
    <text evidence="1">Binds 2 Zn(2+) ions per monomer.</text>
</comment>
<comment type="subunit">
    <text evidence="1">Homodimer.</text>
</comment>
<comment type="subcellular location">
    <subcellularLocation>
        <location evidence="1">Cytoplasm</location>
    </subcellularLocation>
</comment>
<comment type="domain">
    <text evidence="1">The J domain is necessary and sufficient to stimulate DnaK ATPase activity. Zinc center 1 plays an important role in the autonomous, DnaK-independent chaperone activity of DnaJ. Zinc center 2 is essential for interaction with DnaK and for DnaJ activity.</text>
</comment>
<comment type="similarity">
    <text evidence="1">Belongs to the DnaJ family.</text>
</comment>
<gene>
    <name evidence="1" type="primary">dnaJ</name>
    <name type="ordered locus">MTH_1291</name>
</gene>
<name>DNAJ_METTH</name>
<evidence type="ECO:0000255" key="1">
    <source>
        <dbReference type="HAMAP-Rule" id="MF_01152"/>
    </source>
</evidence>
<feature type="chain" id="PRO_0000070950" description="Chaperone protein DnaJ">
    <location>
        <begin position="1"/>
        <end position="376"/>
    </location>
</feature>
<feature type="domain" description="J" evidence="1">
    <location>
        <begin position="5"/>
        <end position="69"/>
    </location>
</feature>
<feature type="repeat" description="CXXCXGXG motif">
    <location>
        <begin position="148"/>
        <end position="155"/>
    </location>
</feature>
<feature type="repeat" description="CXXCXGXG motif">
    <location>
        <begin position="165"/>
        <end position="172"/>
    </location>
</feature>
<feature type="repeat" description="CXXCXGXG motif">
    <location>
        <begin position="191"/>
        <end position="198"/>
    </location>
</feature>
<feature type="repeat" description="CXXCXGXG motif">
    <location>
        <begin position="205"/>
        <end position="212"/>
    </location>
</feature>
<feature type="zinc finger region" description="CR-type" evidence="1">
    <location>
        <begin position="135"/>
        <end position="217"/>
    </location>
</feature>
<feature type="binding site" evidence="1">
    <location>
        <position position="148"/>
    </location>
    <ligand>
        <name>Zn(2+)</name>
        <dbReference type="ChEBI" id="CHEBI:29105"/>
        <label>1</label>
    </ligand>
</feature>
<feature type="binding site" evidence="1">
    <location>
        <position position="151"/>
    </location>
    <ligand>
        <name>Zn(2+)</name>
        <dbReference type="ChEBI" id="CHEBI:29105"/>
        <label>1</label>
    </ligand>
</feature>
<feature type="binding site" evidence="1">
    <location>
        <position position="165"/>
    </location>
    <ligand>
        <name>Zn(2+)</name>
        <dbReference type="ChEBI" id="CHEBI:29105"/>
        <label>2</label>
    </ligand>
</feature>
<feature type="binding site" evidence="1">
    <location>
        <position position="168"/>
    </location>
    <ligand>
        <name>Zn(2+)</name>
        <dbReference type="ChEBI" id="CHEBI:29105"/>
        <label>2</label>
    </ligand>
</feature>
<feature type="binding site" evidence="1">
    <location>
        <position position="191"/>
    </location>
    <ligand>
        <name>Zn(2+)</name>
        <dbReference type="ChEBI" id="CHEBI:29105"/>
        <label>2</label>
    </ligand>
</feature>
<feature type="binding site" evidence="1">
    <location>
        <position position="194"/>
    </location>
    <ligand>
        <name>Zn(2+)</name>
        <dbReference type="ChEBI" id="CHEBI:29105"/>
        <label>2</label>
    </ligand>
</feature>
<feature type="binding site" evidence="1">
    <location>
        <position position="205"/>
    </location>
    <ligand>
        <name>Zn(2+)</name>
        <dbReference type="ChEBI" id="CHEBI:29105"/>
        <label>1</label>
    </ligand>
</feature>
<feature type="binding site" evidence="1">
    <location>
        <position position="208"/>
    </location>
    <ligand>
        <name>Zn(2+)</name>
        <dbReference type="ChEBI" id="CHEBI:29105"/>
        <label>1</label>
    </ligand>
</feature>
<organism>
    <name type="scientific">Methanothermobacter thermautotrophicus (strain ATCC 29096 / DSM 1053 / JCM 10044 / NBRC 100330 / Delta H)</name>
    <name type="common">Methanobacterium thermoautotrophicum</name>
    <dbReference type="NCBI Taxonomy" id="187420"/>
    <lineage>
        <taxon>Archaea</taxon>
        <taxon>Methanobacteriati</taxon>
        <taxon>Methanobacteriota</taxon>
        <taxon>Methanomada group</taxon>
        <taxon>Methanobacteria</taxon>
        <taxon>Methanobacteriales</taxon>
        <taxon>Methanobacteriaceae</taxon>
        <taxon>Methanothermobacter</taxon>
    </lineage>
</organism>
<dbReference type="EMBL" id="AE000666">
    <property type="protein sequence ID" value="AAB85773.1"/>
    <property type="molecule type" value="Genomic_DNA"/>
</dbReference>
<dbReference type="PIR" id="H69038">
    <property type="entry name" value="H69038"/>
</dbReference>
<dbReference type="RefSeq" id="WP_010876908.1">
    <property type="nucleotide sequence ID" value="NC_000916.1"/>
</dbReference>
<dbReference type="SMR" id="O27352"/>
<dbReference type="STRING" id="187420.MTH_1291"/>
<dbReference type="PaxDb" id="187420-MTH_1291"/>
<dbReference type="EnsemblBacteria" id="AAB85773">
    <property type="protein sequence ID" value="AAB85773"/>
    <property type="gene ID" value="MTH_1291"/>
</dbReference>
<dbReference type="GeneID" id="1471008"/>
<dbReference type="GeneID" id="77401816"/>
<dbReference type="KEGG" id="mth:MTH_1291"/>
<dbReference type="PATRIC" id="fig|187420.15.peg.1264"/>
<dbReference type="HOGENOM" id="CLU_017633_0_7_2"/>
<dbReference type="InParanoid" id="O27352"/>
<dbReference type="Proteomes" id="UP000005223">
    <property type="component" value="Chromosome"/>
</dbReference>
<dbReference type="GO" id="GO:0005737">
    <property type="term" value="C:cytoplasm"/>
    <property type="evidence" value="ECO:0007669"/>
    <property type="project" value="UniProtKB-SubCell"/>
</dbReference>
<dbReference type="GO" id="GO:0005524">
    <property type="term" value="F:ATP binding"/>
    <property type="evidence" value="ECO:0007669"/>
    <property type="project" value="InterPro"/>
</dbReference>
<dbReference type="GO" id="GO:0031072">
    <property type="term" value="F:heat shock protein binding"/>
    <property type="evidence" value="ECO:0007669"/>
    <property type="project" value="InterPro"/>
</dbReference>
<dbReference type="GO" id="GO:0051082">
    <property type="term" value="F:unfolded protein binding"/>
    <property type="evidence" value="ECO:0007669"/>
    <property type="project" value="UniProtKB-UniRule"/>
</dbReference>
<dbReference type="GO" id="GO:0008270">
    <property type="term" value="F:zinc ion binding"/>
    <property type="evidence" value="ECO:0007669"/>
    <property type="project" value="UniProtKB-UniRule"/>
</dbReference>
<dbReference type="GO" id="GO:0051085">
    <property type="term" value="P:chaperone cofactor-dependent protein refolding"/>
    <property type="evidence" value="ECO:0007669"/>
    <property type="project" value="TreeGrafter"/>
</dbReference>
<dbReference type="GO" id="GO:0006260">
    <property type="term" value="P:DNA replication"/>
    <property type="evidence" value="ECO:0007669"/>
    <property type="project" value="UniProtKB-KW"/>
</dbReference>
<dbReference type="GO" id="GO:0042026">
    <property type="term" value="P:protein refolding"/>
    <property type="evidence" value="ECO:0007669"/>
    <property type="project" value="TreeGrafter"/>
</dbReference>
<dbReference type="GO" id="GO:0009408">
    <property type="term" value="P:response to heat"/>
    <property type="evidence" value="ECO:0007669"/>
    <property type="project" value="InterPro"/>
</dbReference>
<dbReference type="CDD" id="cd06257">
    <property type="entry name" value="DnaJ"/>
    <property type="match status" value="1"/>
</dbReference>
<dbReference type="CDD" id="cd10747">
    <property type="entry name" value="DnaJ_C"/>
    <property type="match status" value="1"/>
</dbReference>
<dbReference type="CDD" id="cd10719">
    <property type="entry name" value="DnaJ_zf"/>
    <property type="match status" value="1"/>
</dbReference>
<dbReference type="FunFam" id="1.10.287.110:FF:000031">
    <property type="entry name" value="Molecular chaperone DnaJ"/>
    <property type="match status" value="1"/>
</dbReference>
<dbReference type="FunFam" id="2.10.230.10:FF:000002">
    <property type="entry name" value="Molecular chaperone DnaJ"/>
    <property type="match status" value="1"/>
</dbReference>
<dbReference type="FunFam" id="2.60.260.20:FF:000004">
    <property type="entry name" value="Molecular chaperone DnaJ"/>
    <property type="match status" value="1"/>
</dbReference>
<dbReference type="FunFam" id="2.60.260.20:FF:000009">
    <property type="entry name" value="Putative Mitochondrial DnaJ chaperone"/>
    <property type="match status" value="1"/>
</dbReference>
<dbReference type="Gene3D" id="1.10.287.110">
    <property type="entry name" value="DnaJ domain"/>
    <property type="match status" value="1"/>
</dbReference>
<dbReference type="Gene3D" id="2.10.230.10">
    <property type="entry name" value="Heat shock protein DnaJ, cysteine-rich domain"/>
    <property type="match status" value="1"/>
</dbReference>
<dbReference type="Gene3D" id="2.60.260.20">
    <property type="entry name" value="Urease metallochaperone UreE, N-terminal domain"/>
    <property type="match status" value="2"/>
</dbReference>
<dbReference type="HAMAP" id="MF_01152">
    <property type="entry name" value="DnaJ"/>
    <property type="match status" value="1"/>
</dbReference>
<dbReference type="InterPro" id="IPR012724">
    <property type="entry name" value="DnaJ"/>
</dbReference>
<dbReference type="InterPro" id="IPR002939">
    <property type="entry name" value="DnaJ_C"/>
</dbReference>
<dbReference type="InterPro" id="IPR001623">
    <property type="entry name" value="DnaJ_domain"/>
</dbReference>
<dbReference type="InterPro" id="IPR018253">
    <property type="entry name" value="DnaJ_domain_CS"/>
</dbReference>
<dbReference type="InterPro" id="IPR008971">
    <property type="entry name" value="HSP40/DnaJ_pept-bd"/>
</dbReference>
<dbReference type="InterPro" id="IPR001305">
    <property type="entry name" value="HSP_DnaJ_Cys-rich_dom"/>
</dbReference>
<dbReference type="InterPro" id="IPR036410">
    <property type="entry name" value="HSP_DnaJ_Cys-rich_dom_sf"/>
</dbReference>
<dbReference type="InterPro" id="IPR036869">
    <property type="entry name" value="J_dom_sf"/>
</dbReference>
<dbReference type="NCBIfam" id="TIGR02349">
    <property type="entry name" value="DnaJ_bact"/>
    <property type="match status" value="1"/>
</dbReference>
<dbReference type="NCBIfam" id="NF008035">
    <property type="entry name" value="PRK10767.1"/>
    <property type="match status" value="1"/>
</dbReference>
<dbReference type="NCBIfam" id="NF010876">
    <property type="entry name" value="PRK14283.1"/>
    <property type="match status" value="1"/>
</dbReference>
<dbReference type="PANTHER" id="PTHR43096">
    <property type="entry name" value="DNAJ HOMOLOG 1, MITOCHONDRIAL-RELATED"/>
    <property type="match status" value="1"/>
</dbReference>
<dbReference type="PANTHER" id="PTHR43096:SF52">
    <property type="entry name" value="DNAJ HOMOLOG 1, MITOCHONDRIAL-RELATED"/>
    <property type="match status" value="1"/>
</dbReference>
<dbReference type="Pfam" id="PF00226">
    <property type="entry name" value="DnaJ"/>
    <property type="match status" value="1"/>
</dbReference>
<dbReference type="Pfam" id="PF01556">
    <property type="entry name" value="DnaJ_C"/>
    <property type="match status" value="1"/>
</dbReference>
<dbReference type="Pfam" id="PF00684">
    <property type="entry name" value="DnaJ_CXXCXGXG"/>
    <property type="match status" value="1"/>
</dbReference>
<dbReference type="PRINTS" id="PR00625">
    <property type="entry name" value="JDOMAIN"/>
</dbReference>
<dbReference type="SMART" id="SM00271">
    <property type="entry name" value="DnaJ"/>
    <property type="match status" value="1"/>
</dbReference>
<dbReference type="SUPFAM" id="SSF46565">
    <property type="entry name" value="Chaperone J-domain"/>
    <property type="match status" value="1"/>
</dbReference>
<dbReference type="SUPFAM" id="SSF57938">
    <property type="entry name" value="DnaJ/Hsp40 cysteine-rich domain"/>
    <property type="match status" value="1"/>
</dbReference>
<dbReference type="SUPFAM" id="SSF49493">
    <property type="entry name" value="HSP40/DnaJ peptide-binding domain"/>
    <property type="match status" value="2"/>
</dbReference>
<dbReference type="PROSITE" id="PS00636">
    <property type="entry name" value="DNAJ_1"/>
    <property type="match status" value="1"/>
</dbReference>
<dbReference type="PROSITE" id="PS50076">
    <property type="entry name" value="DNAJ_2"/>
    <property type="match status" value="1"/>
</dbReference>
<dbReference type="PROSITE" id="PS51188">
    <property type="entry name" value="ZF_CR"/>
    <property type="match status" value="1"/>
</dbReference>
<keyword id="KW-0143">Chaperone</keyword>
<keyword id="KW-0963">Cytoplasm</keyword>
<keyword id="KW-0235">DNA replication</keyword>
<keyword id="KW-0479">Metal-binding</keyword>
<keyword id="KW-1185">Reference proteome</keyword>
<keyword id="KW-0677">Repeat</keyword>
<keyword id="KW-0346">Stress response</keyword>
<keyword id="KW-0862">Zinc</keyword>
<keyword id="KW-0863">Zinc-finger</keyword>
<sequence>MAKRDYYEILGVDRGADKKEIKKAYRRLARKYHPDVSDDPDAAEKFKEISEAYAVLSDDEKRARYDRFGHAGMDGFSQEDIFNNINFEDIFSGLGFDIGNIFDMFGFGGGRRHGPQRGADISYTLDISLEDAYNGLETDIRVPHTKKCPVCHGSRAEPGTGTRTCQTCGGSGQVRQVRNTILGQMMNITTCPDCQGEGTVVEKPCSNCNGKGVVRKTSTIHVKVPAGVETGSRLRVPGEGEMGLRGGEPGDLYVVIKVKPHSIFRREGANLYTEKPISFVQAALGDTVEVPTLDRPVKLRIPAGTQSGTTFRVKGHGMPHLKWNGYGNLYVKVKVVTPRKLSPRQKELLREFASISGDEIHEDKGFFDKVKDAIIH</sequence>
<proteinExistence type="inferred from homology"/>